<sequence length="379" mass="42854">MTNIRKSHPLMKIINNSFIDLPAPSNISSWWNFGSLLGICLALQILTGLFLAMHYTSDTATAFNSVTHICRDVNYGWILRYLHANGASMFFICLYLHVGRGLYYGSYMYTETWNIGVILLFAVMATAFMGYVLPWGQMSFWGATVITNLLSAIPYIGTDLVEWIWGGFSVDKATLTRFFAFHFLLPFIISAMVMVHLLFLHETGSNNPTGIPSNMDMIPFHPYYTIKDILGMLLMIMTLLTLVLFSPDMLGDPDNYTPANPLNTPPHIKPEWYFLFAYAILRSIPNKLGGVLALVLSILILIIIPLLHTSKQRSMTFRPLSQCLFWLLAADLLTLTWIGGQPVEHPYVIIGQLASILYFSIIIILMPLTSLVENHLLKW</sequence>
<keyword id="KW-0249">Electron transport</keyword>
<keyword id="KW-0349">Heme</keyword>
<keyword id="KW-0408">Iron</keyword>
<keyword id="KW-0472">Membrane</keyword>
<keyword id="KW-0479">Metal-binding</keyword>
<keyword id="KW-0496">Mitochondrion</keyword>
<keyword id="KW-0999">Mitochondrion inner membrane</keyword>
<keyword id="KW-0679">Respiratory chain</keyword>
<keyword id="KW-0812">Transmembrane</keyword>
<keyword id="KW-1133">Transmembrane helix</keyword>
<keyword id="KW-0813">Transport</keyword>
<keyword id="KW-0830">Ubiquinone</keyword>
<organism>
    <name type="scientific">Myotis adversus</name>
    <name type="common">Large-footed bat</name>
    <name type="synonym">Vespertilio adversus</name>
    <dbReference type="NCBI Taxonomy" id="59461"/>
    <lineage>
        <taxon>Eukaryota</taxon>
        <taxon>Metazoa</taxon>
        <taxon>Chordata</taxon>
        <taxon>Craniata</taxon>
        <taxon>Vertebrata</taxon>
        <taxon>Euteleostomi</taxon>
        <taxon>Mammalia</taxon>
        <taxon>Eutheria</taxon>
        <taxon>Laurasiatheria</taxon>
        <taxon>Chiroptera</taxon>
        <taxon>Yangochiroptera</taxon>
        <taxon>Vespertilionidae</taxon>
        <taxon>Myotis</taxon>
    </lineage>
</organism>
<protein>
    <recommendedName>
        <fullName>Cytochrome b</fullName>
    </recommendedName>
    <alternativeName>
        <fullName>Complex III subunit 3</fullName>
    </alternativeName>
    <alternativeName>
        <fullName>Complex III subunit III</fullName>
    </alternativeName>
    <alternativeName>
        <fullName>Cytochrome b-c1 complex subunit 3</fullName>
    </alternativeName>
    <alternativeName>
        <fullName>Ubiquinol-cytochrome-c reductase complex cytochrome b subunit</fullName>
    </alternativeName>
</protein>
<evidence type="ECO:0000250" key="1"/>
<evidence type="ECO:0000250" key="2">
    <source>
        <dbReference type="UniProtKB" id="P00157"/>
    </source>
</evidence>
<evidence type="ECO:0000255" key="3">
    <source>
        <dbReference type="PROSITE-ProRule" id="PRU00967"/>
    </source>
</evidence>
<evidence type="ECO:0000255" key="4">
    <source>
        <dbReference type="PROSITE-ProRule" id="PRU00968"/>
    </source>
</evidence>
<name>CYB_MYOAD</name>
<accession>Q7Y8M0</accession>
<dbReference type="EMBL" id="AB106587">
    <property type="protein sequence ID" value="BAC77793.1"/>
    <property type="molecule type" value="Genomic_DNA"/>
</dbReference>
<dbReference type="SMR" id="Q7Y8M0"/>
<dbReference type="GO" id="GO:0005743">
    <property type="term" value="C:mitochondrial inner membrane"/>
    <property type="evidence" value="ECO:0007669"/>
    <property type="project" value="UniProtKB-SubCell"/>
</dbReference>
<dbReference type="GO" id="GO:0045275">
    <property type="term" value="C:respiratory chain complex III"/>
    <property type="evidence" value="ECO:0007669"/>
    <property type="project" value="InterPro"/>
</dbReference>
<dbReference type="GO" id="GO:0046872">
    <property type="term" value="F:metal ion binding"/>
    <property type="evidence" value="ECO:0007669"/>
    <property type="project" value="UniProtKB-KW"/>
</dbReference>
<dbReference type="GO" id="GO:0008121">
    <property type="term" value="F:ubiquinol-cytochrome-c reductase activity"/>
    <property type="evidence" value="ECO:0007669"/>
    <property type="project" value="InterPro"/>
</dbReference>
<dbReference type="GO" id="GO:0006122">
    <property type="term" value="P:mitochondrial electron transport, ubiquinol to cytochrome c"/>
    <property type="evidence" value="ECO:0007669"/>
    <property type="project" value="TreeGrafter"/>
</dbReference>
<dbReference type="CDD" id="cd00290">
    <property type="entry name" value="cytochrome_b_C"/>
    <property type="match status" value="1"/>
</dbReference>
<dbReference type="CDD" id="cd00284">
    <property type="entry name" value="Cytochrome_b_N"/>
    <property type="match status" value="1"/>
</dbReference>
<dbReference type="FunFam" id="1.20.810.10:FF:000002">
    <property type="entry name" value="Cytochrome b"/>
    <property type="match status" value="1"/>
</dbReference>
<dbReference type="Gene3D" id="1.20.810.10">
    <property type="entry name" value="Cytochrome Bc1 Complex, Chain C"/>
    <property type="match status" value="1"/>
</dbReference>
<dbReference type="InterPro" id="IPR005798">
    <property type="entry name" value="Cyt_b/b6_C"/>
</dbReference>
<dbReference type="InterPro" id="IPR036150">
    <property type="entry name" value="Cyt_b/b6_C_sf"/>
</dbReference>
<dbReference type="InterPro" id="IPR005797">
    <property type="entry name" value="Cyt_b/b6_N"/>
</dbReference>
<dbReference type="InterPro" id="IPR027387">
    <property type="entry name" value="Cytb/b6-like_sf"/>
</dbReference>
<dbReference type="InterPro" id="IPR030689">
    <property type="entry name" value="Cytochrome_b"/>
</dbReference>
<dbReference type="InterPro" id="IPR048260">
    <property type="entry name" value="Cytochrome_b_C_euk/bac"/>
</dbReference>
<dbReference type="InterPro" id="IPR048259">
    <property type="entry name" value="Cytochrome_b_N_euk/bac"/>
</dbReference>
<dbReference type="InterPro" id="IPR016174">
    <property type="entry name" value="Di-haem_cyt_TM"/>
</dbReference>
<dbReference type="PANTHER" id="PTHR19271">
    <property type="entry name" value="CYTOCHROME B"/>
    <property type="match status" value="1"/>
</dbReference>
<dbReference type="PANTHER" id="PTHR19271:SF16">
    <property type="entry name" value="CYTOCHROME B"/>
    <property type="match status" value="1"/>
</dbReference>
<dbReference type="Pfam" id="PF00032">
    <property type="entry name" value="Cytochrom_B_C"/>
    <property type="match status" value="1"/>
</dbReference>
<dbReference type="Pfam" id="PF00033">
    <property type="entry name" value="Cytochrome_B"/>
    <property type="match status" value="1"/>
</dbReference>
<dbReference type="PIRSF" id="PIRSF038885">
    <property type="entry name" value="COB"/>
    <property type="match status" value="1"/>
</dbReference>
<dbReference type="SUPFAM" id="SSF81648">
    <property type="entry name" value="a domain/subunit of cytochrome bc1 complex (Ubiquinol-cytochrome c reductase)"/>
    <property type="match status" value="1"/>
</dbReference>
<dbReference type="SUPFAM" id="SSF81342">
    <property type="entry name" value="Transmembrane di-heme cytochromes"/>
    <property type="match status" value="1"/>
</dbReference>
<dbReference type="PROSITE" id="PS51003">
    <property type="entry name" value="CYTB_CTER"/>
    <property type="match status" value="1"/>
</dbReference>
<dbReference type="PROSITE" id="PS51002">
    <property type="entry name" value="CYTB_NTER"/>
    <property type="match status" value="1"/>
</dbReference>
<feature type="chain" id="PRO_0000061229" description="Cytochrome b">
    <location>
        <begin position="1"/>
        <end position="379"/>
    </location>
</feature>
<feature type="transmembrane region" description="Helical" evidence="2">
    <location>
        <begin position="33"/>
        <end position="53"/>
    </location>
</feature>
<feature type="transmembrane region" description="Helical" evidence="2">
    <location>
        <begin position="77"/>
        <end position="98"/>
    </location>
</feature>
<feature type="transmembrane region" description="Helical" evidence="2">
    <location>
        <begin position="113"/>
        <end position="133"/>
    </location>
</feature>
<feature type="transmembrane region" description="Helical" evidence="2">
    <location>
        <begin position="178"/>
        <end position="198"/>
    </location>
</feature>
<feature type="transmembrane region" description="Helical" evidence="2">
    <location>
        <begin position="226"/>
        <end position="246"/>
    </location>
</feature>
<feature type="transmembrane region" description="Helical" evidence="2">
    <location>
        <begin position="288"/>
        <end position="308"/>
    </location>
</feature>
<feature type="transmembrane region" description="Helical" evidence="2">
    <location>
        <begin position="320"/>
        <end position="340"/>
    </location>
</feature>
<feature type="transmembrane region" description="Helical" evidence="2">
    <location>
        <begin position="347"/>
        <end position="367"/>
    </location>
</feature>
<feature type="binding site" description="axial binding residue" evidence="2">
    <location>
        <position position="83"/>
    </location>
    <ligand>
        <name>heme b</name>
        <dbReference type="ChEBI" id="CHEBI:60344"/>
        <label>b562</label>
    </ligand>
    <ligandPart>
        <name>Fe</name>
        <dbReference type="ChEBI" id="CHEBI:18248"/>
    </ligandPart>
</feature>
<feature type="binding site" description="axial binding residue" evidence="2">
    <location>
        <position position="97"/>
    </location>
    <ligand>
        <name>heme b</name>
        <dbReference type="ChEBI" id="CHEBI:60344"/>
        <label>b566</label>
    </ligand>
    <ligandPart>
        <name>Fe</name>
        <dbReference type="ChEBI" id="CHEBI:18248"/>
    </ligandPart>
</feature>
<feature type="binding site" description="axial binding residue" evidence="2">
    <location>
        <position position="182"/>
    </location>
    <ligand>
        <name>heme b</name>
        <dbReference type="ChEBI" id="CHEBI:60344"/>
        <label>b562</label>
    </ligand>
    <ligandPart>
        <name>Fe</name>
        <dbReference type="ChEBI" id="CHEBI:18248"/>
    </ligandPart>
</feature>
<feature type="binding site" description="axial binding residue" evidence="2">
    <location>
        <position position="196"/>
    </location>
    <ligand>
        <name>heme b</name>
        <dbReference type="ChEBI" id="CHEBI:60344"/>
        <label>b566</label>
    </ligand>
    <ligandPart>
        <name>Fe</name>
        <dbReference type="ChEBI" id="CHEBI:18248"/>
    </ligandPart>
</feature>
<feature type="binding site" evidence="2">
    <location>
        <position position="201"/>
    </location>
    <ligand>
        <name>a ubiquinone</name>
        <dbReference type="ChEBI" id="CHEBI:16389"/>
    </ligand>
</feature>
<proteinExistence type="inferred from homology"/>
<reference key="1">
    <citation type="journal article" date="2003" name="Mol. Phylogenet. Evol.">
        <title>The status of the Japanese and East Asian bats of the genus Myotis (Vespertilionidae) based on mitochondrial sequences.</title>
        <authorList>
            <person name="Kawai K."/>
            <person name="Nikaido M."/>
            <person name="Harada M."/>
            <person name="Matsumura S."/>
            <person name="Lin L."/>
            <person name="Wu Y."/>
            <person name="Hasegawa M."/>
            <person name="Okada N."/>
        </authorList>
    </citation>
    <scope>NUCLEOTIDE SEQUENCE [GENOMIC DNA]</scope>
    <source>
        <strain>Isolate OCUMS6825</strain>
    </source>
</reference>
<comment type="function">
    <text evidence="2">Component of the ubiquinol-cytochrome c reductase complex (complex III or cytochrome b-c1 complex) that is part of the mitochondrial respiratory chain. The b-c1 complex mediates electron transfer from ubiquinol to cytochrome c. Contributes to the generation of a proton gradient across the mitochondrial membrane that is then used for ATP synthesis.</text>
</comment>
<comment type="cofactor">
    <cofactor evidence="2">
        <name>heme b</name>
        <dbReference type="ChEBI" id="CHEBI:60344"/>
    </cofactor>
    <text evidence="2">Binds 2 heme b groups non-covalently.</text>
</comment>
<comment type="subunit">
    <text evidence="2">The cytochrome bc1 complex contains 11 subunits: 3 respiratory subunits (MT-CYB, CYC1 and UQCRFS1), 2 core proteins (UQCRC1 and UQCRC2) and 6 low-molecular weight proteins (UQCRH/QCR6, UQCRB/QCR7, UQCRQ/QCR8, UQCR10/QCR9, UQCR11/QCR10 and a cleavage product of UQCRFS1). This cytochrome bc1 complex then forms a dimer.</text>
</comment>
<comment type="subcellular location">
    <subcellularLocation>
        <location evidence="2">Mitochondrion inner membrane</location>
        <topology evidence="2">Multi-pass membrane protein</topology>
    </subcellularLocation>
</comment>
<comment type="miscellaneous">
    <text evidence="1">Heme 1 (or BL or b562) is low-potential and absorbs at about 562 nm, and heme 2 (or BH or b566) is high-potential and absorbs at about 566 nm.</text>
</comment>
<comment type="similarity">
    <text evidence="3 4">Belongs to the cytochrome b family.</text>
</comment>
<comment type="caution">
    <text evidence="2">The full-length protein contains only eight transmembrane helices, not nine as predicted by bioinformatics tools.</text>
</comment>
<gene>
    <name type="primary">MT-CYB</name>
    <name type="synonym">COB</name>
    <name type="synonym">CYTB</name>
    <name type="synonym">MTCYB</name>
</gene>
<geneLocation type="mitochondrion"/>